<name>ADDH_SCHPO</name>
<sequence length="324" mass="35933">MLSKKFTPLSLKNAAKCINNSLRSTYAITGVNLTRGLATNSKVDPKTYAPKPEFSSIAVREMLRKSCLHEFTDEEVATRIELAAAYRLFGLEHWNENILNHLTAKVEEPDGTASFLINPYGLRYGEITASSLIKVDEDGNIKHPGVTGDVFGINRAGYVIHSAIHRARPDVKSIMHNHYPYAAGVSCVKHGFLELAQTSHQSGPVTYHDYHGIVVDKGEQKSLAEDIANKDILILRNHGIITAAESVGAAYYLMYQFLAATEIQTHASANALGDMNNLFIPNNKLVEKTFDVTREKHFSGAKYGIKELSAYMRLLDDLDSSYRT</sequence>
<feature type="chain" id="PRO_0000353840" description="Adducin-related protein C1289.14">
    <location>
        <begin position="1"/>
        <end position="324"/>
    </location>
</feature>
<organism>
    <name type="scientific">Schizosaccharomyces pombe (strain 972 / ATCC 24843)</name>
    <name type="common">Fission yeast</name>
    <dbReference type="NCBI Taxonomy" id="284812"/>
    <lineage>
        <taxon>Eukaryota</taxon>
        <taxon>Fungi</taxon>
        <taxon>Dikarya</taxon>
        <taxon>Ascomycota</taxon>
        <taxon>Taphrinomycotina</taxon>
        <taxon>Schizosaccharomycetes</taxon>
        <taxon>Schizosaccharomycetales</taxon>
        <taxon>Schizosaccharomycetaceae</taxon>
        <taxon>Schizosaccharomyces</taxon>
    </lineage>
</organism>
<protein>
    <recommendedName>
        <fullName>Adducin-related protein C1289.14</fullName>
    </recommendedName>
</protein>
<proteinExistence type="evidence at transcript level"/>
<evidence type="ECO:0000269" key="1">
    <source>
    </source>
</evidence>
<evidence type="ECO:0000305" key="2"/>
<gene>
    <name type="ORF">SPBC1289.14</name>
    <name type="ORF">SPBC8E4.10c</name>
</gene>
<accession>Q7LKY2</accession>
<comment type="induction">
    <text evidence="1">By stress.</text>
</comment>
<comment type="similarity">
    <text evidence="2">Belongs to the aldolase class II family. Adducin subfamily.</text>
</comment>
<dbReference type="EMBL" id="CU329671">
    <property type="protein sequence ID" value="CAB38694.1"/>
    <property type="molecule type" value="Genomic_DNA"/>
</dbReference>
<dbReference type="PIR" id="T39175">
    <property type="entry name" value="T39175"/>
</dbReference>
<dbReference type="RefSeq" id="NP_596838.1">
    <property type="nucleotide sequence ID" value="NM_001023859.2"/>
</dbReference>
<dbReference type="SMR" id="Q7LKY2"/>
<dbReference type="BioGRID" id="276534">
    <property type="interactions" value="19"/>
</dbReference>
<dbReference type="FunCoup" id="Q7LKY2">
    <property type="interactions" value="3"/>
</dbReference>
<dbReference type="STRING" id="284812.Q7LKY2"/>
<dbReference type="PaxDb" id="4896-SPBC1289.14.1"/>
<dbReference type="EnsemblFungi" id="SPBC1289.14.1">
    <property type="protein sequence ID" value="SPBC1289.14.1:pep"/>
    <property type="gene ID" value="SPBC1289.14"/>
</dbReference>
<dbReference type="KEGG" id="spo:2539990"/>
<dbReference type="PomBase" id="SPBC1289.14"/>
<dbReference type="VEuPathDB" id="FungiDB:SPBC1289.14"/>
<dbReference type="eggNOG" id="KOG3699">
    <property type="taxonomic scope" value="Eukaryota"/>
</dbReference>
<dbReference type="HOGENOM" id="CLU_006033_0_0_1"/>
<dbReference type="InParanoid" id="Q7LKY2"/>
<dbReference type="OMA" id="QSHASAC"/>
<dbReference type="PhylomeDB" id="Q7LKY2"/>
<dbReference type="Reactome" id="R-SPO-9013405">
    <property type="pathway name" value="RHOD GTPase cycle"/>
</dbReference>
<dbReference type="PRO" id="PR:Q7LKY2"/>
<dbReference type="Proteomes" id="UP000002485">
    <property type="component" value="Chromosome II"/>
</dbReference>
<dbReference type="GO" id="GO:0005856">
    <property type="term" value="C:cytoskeleton"/>
    <property type="evidence" value="ECO:0000318"/>
    <property type="project" value="GO_Central"/>
</dbReference>
<dbReference type="GO" id="GO:0051015">
    <property type="term" value="F:actin filament binding"/>
    <property type="evidence" value="ECO:0000318"/>
    <property type="project" value="GO_Central"/>
</dbReference>
<dbReference type="GO" id="GO:0030036">
    <property type="term" value="P:actin cytoskeleton organization"/>
    <property type="evidence" value="ECO:0000250"/>
    <property type="project" value="PomBase"/>
</dbReference>
<dbReference type="Gene3D" id="3.40.225.10">
    <property type="entry name" value="Class II aldolase/adducin N-terminal domain"/>
    <property type="match status" value="1"/>
</dbReference>
<dbReference type="InterPro" id="IPR051017">
    <property type="entry name" value="Aldolase-II_Adducin_sf"/>
</dbReference>
<dbReference type="InterPro" id="IPR001303">
    <property type="entry name" value="Aldolase_II/adducin_N"/>
</dbReference>
<dbReference type="InterPro" id="IPR036409">
    <property type="entry name" value="Aldolase_II/adducin_N_sf"/>
</dbReference>
<dbReference type="NCBIfam" id="NF005451">
    <property type="entry name" value="PRK07044.1"/>
    <property type="match status" value="1"/>
</dbReference>
<dbReference type="PANTHER" id="PTHR10672">
    <property type="entry name" value="ADDUCIN"/>
    <property type="match status" value="1"/>
</dbReference>
<dbReference type="PANTHER" id="PTHR10672:SF3">
    <property type="entry name" value="PROTEIN HU-LI TAI SHAO"/>
    <property type="match status" value="1"/>
</dbReference>
<dbReference type="Pfam" id="PF00596">
    <property type="entry name" value="Aldolase_II"/>
    <property type="match status" value="1"/>
</dbReference>
<dbReference type="SMART" id="SM01007">
    <property type="entry name" value="Aldolase_II"/>
    <property type="match status" value="1"/>
</dbReference>
<dbReference type="SUPFAM" id="SSF53639">
    <property type="entry name" value="AraD/HMP-PK domain-like"/>
    <property type="match status" value="1"/>
</dbReference>
<keyword id="KW-1185">Reference proteome</keyword>
<reference key="1">
    <citation type="journal article" date="2002" name="Nature">
        <title>The genome sequence of Schizosaccharomyces pombe.</title>
        <authorList>
            <person name="Wood V."/>
            <person name="Gwilliam R."/>
            <person name="Rajandream M.A."/>
            <person name="Lyne M.H."/>
            <person name="Lyne R."/>
            <person name="Stewart A."/>
            <person name="Sgouros J.G."/>
            <person name="Peat N."/>
            <person name="Hayles J."/>
            <person name="Baker S.G."/>
            <person name="Basham D."/>
            <person name="Bowman S."/>
            <person name="Brooks K."/>
            <person name="Brown D."/>
            <person name="Brown S."/>
            <person name="Chillingworth T."/>
            <person name="Churcher C.M."/>
            <person name="Collins M."/>
            <person name="Connor R."/>
            <person name="Cronin A."/>
            <person name="Davis P."/>
            <person name="Feltwell T."/>
            <person name="Fraser A."/>
            <person name="Gentles S."/>
            <person name="Goble A."/>
            <person name="Hamlin N."/>
            <person name="Harris D.E."/>
            <person name="Hidalgo J."/>
            <person name="Hodgson G."/>
            <person name="Holroyd S."/>
            <person name="Hornsby T."/>
            <person name="Howarth S."/>
            <person name="Huckle E.J."/>
            <person name="Hunt S."/>
            <person name="Jagels K."/>
            <person name="James K.D."/>
            <person name="Jones L."/>
            <person name="Jones M."/>
            <person name="Leather S."/>
            <person name="McDonald S."/>
            <person name="McLean J."/>
            <person name="Mooney P."/>
            <person name="Moule S."/>
            <person name="Mungall K.L."/>
            <person name="Murphy L.D."/>
            <person name="Niblett D."/>
            <person name="Odell C."/>
            <person name="Oliver K."/>
            <person name="O'Neil S."/>
            <person name="Pearson D."/>
            <person name="Quail M.A."/>
            <person name="Rabbinowitsch E."/>
            <person name="Rutherford K.M."/>
            <person name="Rutter S."/>
            <person name="Saunders D."/>
            <person name="Seeger K."/>
            <person name="Sharp S."/>
            <person name="Skelton J."/>
            <person name="Simmonds M.N."/>
            <person name="Squares R."/>
            <person name="Squares S."/>
            <person name="Stevens K."/>
            <person name="Taylor K."/>
            <person name="Taylor R.G."/>
            <person name="Tivey A."/>
            <person name="Walsh S.V."/>
            <person name="Warren T."/>
            <person name="Whitehead S."/>
            <person name="Woodward J.R."/>
            <person name="Volckaert G."/>
            <person name="Aert R."/>
            <person name="Robben J."/>
            <person name="Grymonprez B."/>
            <person name="Weltjens I."/>
            <person name="Vanstreels E."/>
            <person name="Rieger M."/>
            <person name="Schaefer M."/>
            <person name="Mueller-Auer S."/>
            <person name="Gabel C."/>
            <person name="Fuchs M."/>
            <person name="Duesterhoeft A."/>
            <person name="Fritzc C."/>
            <person name="Holzer E."/>
            <person name="Moestl D."/>
            <person name="Hilbert H."/>
            <person name="Borzym K."/>
            <person name="Langer I."/>
            <person name="Beck A."/>
            <person name="Lehrach H."/>
            <person name="Reinhardt R."/>
            <person name="Pohl T.M."/>
            <person name="Eger P."/>
            <person name="Zimmermann W."/>
            <person name="Wedler H."/>
            <person name="Wambutt R."/>
            <person name="Purnelle B."/>
            <person name="Goffeau A."/>
            <person name="Cadieu E."/>
            <person name="Dreano S."/>
            <person name="Gloux S."/>
            <person name="Lelaure V."/>
            <person name="Mottier S."/>
            <person name="Galibert F."/>
            <person name="Aves S.J."/>
            <person name="Xiang Z."/>
            <person name="Hunt C."/>
            <person name="Moore K."/>
            <person name="Hurst S.M."/>
            <person name="Lucas M."/>
            <person name="Rochet M."/>
            <person name="Gaillardin C."/>
            <person name="Tallada V.A."/>
            <person name="Garzon A."/>
            <person name="Thode G."/>
            <person name="Daga R.R."/>
            <person name="Cruzado L."/>
            <person name="Jimenez J."/>
            <person name="Sanchez M."/>
            <person name="del Rey F."/>
            <person name="Benito J."/>
            <person name="Dominguez A."/>
            <person name="Revuelta J.L."/>
            <person name="Moreno S."/>
            <person name="Armstrong J."/>
            <person name="Forsburg S.L."/>
            <person name="Cerutti L."/>
            <person name="Lowe T."/>
            <person name="McCombie W.R."/>
            <person name="Paulsen I."/>
            <person name="Potashkin J."/>
            <person name="Shpakovski G.V."/>
            <person name="Ussery D."/>
            <person name="Barrell B.G."/>
            <person name="Nurse P."/>
        </authorList>
    </citation>
    <scope>NUCLEOTIDE SEQUENCE [LARGE SCALE GENOMIC DNA]</scope>
    <source>
        <strain>972 / ATCC 24843</strain>
    </source>
</reference>
<reference key="2">
    <citation type="journal article" date="2003" name="Mol. Biol. Cell">
        <title>Global transcriptional responses of fission yeast to environmental stress.</title>
        <authorList>
            <person name="Chen D."/>
            <person name="Toone W.M."/>
            <person name="Mata J."/>
            <person name="Lyne R."/>
            <person name="Burns G."/>
            <person name="Kivinen K."/>
            <person name="Brazma A."/>
            <person name="Jones N."/>
            <person name="Baehler J."/>
        </authorList>
    </citation>
    <scope>INDUCTION</scope>
</reference>